<comment type="function">
    <text evidence="1">The UvrABC repair system catalyzes the recognition and processing of DNA lesions. UvrC both incises the 5' and 3' sides of the lesion. The N-terminal half is responsible for the 3' incision and the C-terminal half is responsible for the 5' incision.</text>
</comment>
<comment type="subunit">
    <text evidence="1">Interacts with UvrB in an incision complex.</text>
</comment>
<comment type="subcellular location">
    <subcellularLocation>
        <location evidence="1">Cytoplasm</location>
    </subcellularLocation>
</comment>
<comment type="similarity">
    <text evidence="1">Belongs to the UvrC family.</text>
</comment>
<evidence type="ECO:0000255" key="1">
    <source>
        <dbReference type="HAMAP-Rule" id="MF_00203"/>
    </source>
</evidence>
<sequence>MASEHLEHKLALLPDKPGCYLMKNINDQIIYVGKAKNLKNRVRSYFKSSHTGKVAKMVSEVADFETIVTSTNKESFLLEITLIQKHQPYFNIKLKKGTGYPYIKITNERDPQIKIVSKIKKDGGYYFGPYPNVYAAEETMHFIQKVYPLRRCNGYQGRPCLYYHMGQCLGACFKEVPKSDYEEQIKKIKSFLSGNTATVKRQLTKKMQRAAENMEFERAAEIRDQLHYIEVTVEKQKIISNDKTPRDLFNFYMDKGWLSIQIFFIRQARLMKREKRLFPIVDTAVEEMTSFILQFYNRRNNILPHEILLPKGLPNKEISEILGVPVRTPVRGEKRDLLAMAHENAQLSLDEKFRLLEMDQSKTTGAMKEITDALGLPEGHRIEAFDHSHIQGADPVSAMVVFINGEPAKNFYRKYKLKTVINHADEAASTREVIRRRYSRLLKENKPMPDMIFMDGGEIQMDAAKDVLENELGLEIPVVGMVKNDKHQTADLLFGDDDHHINLNPRSQGFYLVQRIQDEVHRFAITFHRRVHTKHSLSSRLDEIKGVGPRTRTKLLKKYGSITKIAQASVDEIHSLGINRPTAQLIKVSLQKNAEVAKGSSHD</sequence>
<reference key="1">
    <citation type="journal article" date="2008" name="DNA Res.">
        <title>Comparative genome analysis of Lactobacillus reuteri and Lactobacillus fermentum reveal a genomic island for reuterin and cobalamin production.</title>
        <authorList>
            <person name="Morita H."/>
            <person name="Toh H."/>
            <person name="Fukuda S."/>
            <person name="Horikawa H."/>
            <person name="Oshima K."/>
            <person name="Suzuki T."/>
            <person name="Murakami M."/>
            <person name="Hisamatsu S."/>
            <person name="Kato Y."/>
            <person name="Takizawa T."/>
            <person name="Fukuoka H."/>
            <person name="Yoshimura T."/>
            <person name="Itoh K."/>
            <person name="O'Sullivan D.J."/>
            <person name="McKay L.L."/>
            <person name="Ohno H."/>
            <person name="Kikuchi J."/>
            <person name="Masaoka T."/>
            <person name="Hattori M."/>
        </authorList>
    </citation>
    <scope>NUCLEOTIDE SEQUENCE [LARGE SCALE GENOMIC DNA]</scope>
    <source>
        <strain>JCM 1112</strain>
    </source>
</reference>
<accession>B2G6R8</accession>
<dbReference type="EMBL" id="AP007281">
    <property type="protein sequence ID" value="BAG25150.1"/>
    <property type="molecule type" value="Genomic_DNA"/>
</dbReference>
<dbReference type="RefSeq" id="WP_003668235.1">
    <property type="nucleotide sequence ID" value="NC_010609.1"/>
</dbReference>
<dbReference type="SMR" id="B2G6R8"/>
<dbReference type="KEGG" id="lrf:LAR_0634"/>
<dbReference type="HOGENOM" id="CLU_014841_3_2_9"/>
<dbReference type="GO" id="GO:0005737">
    <property type="term" value="C:cytoplasm"/>
    <property type="evidence" value="ECO:0007669"/>
    <property type="project" value="UniProtKB-SubCell"/>
</dbReference>
<dbReference type="GO" id="GO:0009380">
    <property type="term" value="C:excinuclease repair complex"/>
    <property type="evidence" value="ECO:0007669"/>
    <property type="project" value="InterPro"/>
</dbReference>
<dbReference type="GO" id="GO:0003677">
    <property type="term" value="F:DNA binding"/>
    <property type="evidence" value="ECO:0007669"/>
    <property type="project" value="UniProtKB-UniRule"/>
</dbReference>
<dbReference type="GO" id="GO:0009381">
    <property type="term" value="F:excinuclease ABC activity"/>
    <property type="evidence" value="ECO:0007669"/>
    <property type="project" value="UniProtKB-UniRule"/>
</dbReference>
<dbReference type="GO" id="GO:0006289">
    <property type="term" value="P:nucleotide-excision repair"/>
    <property type="evidence" value="ECO:0007669"/>
    <property type="project" value="UniProtKB-UniRule"/>
</dbReference>
<dbReference type="GO" id="GO:0009432">
    <property type="term" value="P:SOS response"/>
    <property type="evidence" value="ECO:0007669"/>
    <property type="project" value="UniProtKB-UniRule"/>
</dbReference>
<dbReference type="CDD" id="cd10434">
    <property type="entry name" value="GIY-YIG_UvrC_Cho"/>
    <property type="match status" value="1"/>
</dbReference>
<dbReference type="FunFam" id="3.30.420.340:FF:000002">
    <property type="entry name" value="UvrABC system protein C"/>
    <property type="match status" value="1"/>
</dbReference>
<dbReference type="FunFam" id="3.40.1440.10:FF:000001">
    <property type="entry name" value="UvrABC system protein C"/>
    <property type="match status" value="1"/>
</dbReference>
<dbReference type="FunFam" id="4.10.860.10:FF:000002">
    <property type="entry name" value="UvrABC system protein C"/>
    <property type="match status" value="1"/>
</dbReference>
<dbReference type="Gene3D" id="1.10.150.20">
    <property type="entry name" value="5' to 3' exonuclease, C-terminal subdomain"/>
    <property type="match status" value="1"/>
</dbReference>
<dbReference type="Gene3D" id="3.40.1440.10">
    <property type="entry name" value="GIY-YIG endonuclease"/>
    <property type="match status" value="1"/>
</dbReference>
<dbReference type="Gene3D" id="4.10.860.10">
    <property type="entry name" value="UVR domain"/>
    <property type="match status" value="1"/>
</dbReference>
<dbReference type="Gene3D" id="3.30.420.340">
    <property type="entry name" value="UvrC, RNAse H endonuclease domain"/>
    <property type="match status" value="1"/>
</dbReference>
<dbReference type="HAMAP" id="MF_00203">
    <property type="entry name" value="UvrC"/>
    <property type="match status" value="1"/>
</dbReference>
<dbReference type="InterPro" id="IPR000305">
    <property type="entry name" value="GIY-YIG_endonuc"/>
</dbReference>
<dbReference type="InterPro" id="IPR035901">
    <property type="entry name" value="GIY-YIG_endonuc_sf"/>
</dbReference>
<dbReference type="InterPro" id="IPR047296">
    <property type="entry name" value="GIY-YIG_UvrC_Cho"/>
</dbReference>
<dbReference type="InterPro" id="IPR010994">
    <property type="entry name" value="RuvA_2-like"/>
</dbReference>
<dbReference type="InterPro" id="IPR001943">
    <property type="entry name" value="UVR_dom"/>
</dbReference>
<dbReference type="InterPro" id="IPR036876">
    <property type="entry name" value="UVR_dom_sf"/>
</dbReference>
<dbReference type="InterPro" id="IPR050066">
    <property type="entry name" value="UvrABC_protein_C"/>
</dbReference>
<dbReference type="InterPro" id="IPR004791">
    <property type="entry name" value="UvrC"/>
</dbReference>
<dbReference type="InterPro" id="IPR001162">
    <property type="entry name" value="UvrC_RNase_H_dom"/>
</dbReference>
<dbReference type="InterPro" id="IPR038476">
    <property type="entry name" value="UvrC_RNase_H_dom_sf"/>
</dbReference>
<dbReference type="NCBIfam" id="TIGR00194">
    <property type="entry name" value="uvrC"/>
    <property type="match status" value="1"/>
</dbReference>
<dbReference type="PANTHER" id="PTHR30562:SF1">
    <property type="entry name" value="UVRABC SYSTEM PROTEIN C"/>
    <property type="match status" value="1"/>
</dbReference>
<dbReference type="PANTHER" id="PTHR30562">
    <property type="entry name" value="UVRC/OXIDOREDUCTASE"/>
    <property type="match status" value="1"/>
</dbReference>
<dbReference type="Pfam" id="PF01541">
    <property type="entry name" value="GIY-YIG"/>
    <property type="match status" value="1"/>
</dbReference>
<dbReference type="Pfam" id="PF14520">
    <property type="entry name" value="HHH_5"/>
    <property type="match status" value="1"/>
</dbReference>
<dbReference type="Pfam" id="PF02151">
    <property type="entry name" value="UVR"/>
    <property type="match status" value="1"/>
</dbReference>
<dbReference type="Pfam" id="PF22920">
    <property type="entry name" value="UvrC_RNaseH"/>
    <property type="match status" value="1"/>
</dbReference>
<dbReference type="Pfam" id="PF08459">
    <property type="entry name" value="UvrC_RNaseH_dom"/>
    <property type="match status" value="1"/>
</dbReference>
<dbReference type="SMART" id="SM00465">
    <property type="entry name" value="GIYc"/>
    <property type="match status" value="1"/>
</dbReference>
<dbReference type="SUPFAM" id="SSF46600">
    <property type="entry name" value="C-terminal UvrC-binding domain of UvrB"/>
    <property type="match status" value="1"/>
</dbReference>
<dbReference type="SUPFAM" id="SSF82771">
    <property type="entry name" value="GIY-YIG endonuclease"/>
    <property type="match status" value="1"/>
</dbReference>
<dbReference type="SUPFAM" id="SSF47781">
    <property type="entry name" value="RuvA domain 2-like"/>
    <property type="match status" value="1"/>
</dbReference>
<dbReference type="PROSITE" id="PS50164">
    <property type="entry name" value="GIY_YIG"/>
    <property type="match status" value="1"/>
</dbReference>
<dbReference type="PROSITE" id="PS50151">
    <property type="entry name" value="UVR"/>
    <property type="match status" value="1"/>
</dbReference>
<dbReference type="PROSITE" id="PS50165">
    <property type="entry name" value="UVRC"/>
    <property type="match status" value="1"/>
</dbReference>
<protein>
    <recommendedName>
        <fullName evidence="1">UvrABC system protein C</fullName>
        <shortName evidence="1">Protein UvrC</shortName>
    </recommendedName>
    <alternativeName>
        <fullName evidence="1">Excinuclease ABC subunit C</fullName>
    </alternativeName>
</protein>
<keyword id="KW-0963">Cytoplasm</keyword>
<keyword id="KW-0227">DNA damage</keyword>
<keyword id="KW-0228">DNA excision</keyword>
<keyword id="KW-0234">DNA repair</keyword>
<keyword id="KW-0267">Excision nuclease</keyword>
<keyword id="KW-0742">SOS response</keyword>
<organism>
    <name type="scientific">Limosilactobacillus reuteri subsp. reuteri (strain JCM 1112)</name>
    <name type="common">Lactobacillus reuteri</name>
    <dbReference type="NCBI Taxonomy" id="557433"/>
    <lineage>
        <taxon>Bacteria</taxon>
        <taxon>Bacillati</taxon>
        <taxon>Bacillota</taxon>
        <taxon>Bacilli</taxon>
        <taxon>Lactobacillales</taxon>
        <taxon>Lactobacillaceae</taxon>
        <taxon>Limosilactobacillus</taxon>
    </lineage>
</organism>
<gene>
    <name evidence="1" type="primary">uvrC</name>
    <name type="ordered locus">LAR_0634</name>
</gene>
<proteinExistence type="inferred from homology"/>
<feature type="chain" id="PRO_1000099497" description="UvrABC system protein C">
    <location>
        <begin position="1"/>
        <end position="603"/>
    </location>
</feature>
<feature type="domain" description="GIY-YIG" evidence="1">
    <location>
        <begin position="15"/>
        <end position="92"/>
    </location>
</feature>
<feature type="domain" description="UVR" evidence="1">
    <location>
        <begin position="197"/>
        <end position="232"/>
    </location>
</feature>
<name>UVRC_LIMRJ</name>